<sequence length="247" mass="26731">APRKFFVGGNWKMNGDKKSLGELIQTLNAAKVPFTGEIVCAPPEAYLDFARLKVDPKFGVAAQNCYKVSKGAFTGEISPAMIKDCGVTWVILGHSERRHVFGESDELIGQKVSHALSEGLGVVACIGEKLDEREAGITEGVVFEVTEVIADDVKDWSKVVLAYEPVWAIGTGKTASPQQSQELHGKLRKWLKENVSETVADSVRIIYGGSVTGATCKELASEPDVDGFLVGGASLKPEFVEYKDVRQ</sequence>
<accession>P00941</accession>
<comment type="function">
    <text evidence="1">Triosephosphate isomerase is an extremely efficient metabolic enzyme that catalyzes the interconversion between dihydroxyacetone phosphate (DHAP) and D-glyceraldehyde-3-phosphate (G3P) in glycolysis and gluconeogenesis.</text>
</comment>
<comment type="function">
    <text evidence="1">It is also responsible for the non-negligible production of methylglyoxal a reactive cytotoxic side-product that modifies and can alter proteins, DNA and lipids.</text>
</comment>
<comment type="catalytic activity">
    <reaction evidence="2">
        <text>D-glyceraldehyde 3-phosphate = dihydroxyacetone phosphate</text>
        <dbReference type="Rhea" id="RHEA:18585"/>
        <dbReference type="ChEBI" id="CHEBI:57642"/>
        <dbReference type="ChEBI" id="CHEBI:59776"/>
        <dbReference type="EC" id="5.3.1.1"/>
    </reaction>
</comment>
<comment type="catalytic activity">
    <reaction evidence="1">
        <text>dihydroxyacetone phosphate = methylglyoxal + phosphate</text>
        <dbReference type="Rhea" id="RHEA:17937"/>
        <dbReference type="ChEBI" id="CHEBI:17158"/>
        <dbReference type="ChEBI" id="CHEBI:43474"/>
        <dbReference type="ChEBI" id="CHEBI:57642"/>
        <dbReference type="EC" id="4.2.3.3"/>
    </reaction>
</comment>
<comment type="pathway">
    <text evidence="2">Carbohydrate biosynthesis; gluconeogenesis.</text>
</comment>
<comment type="pathway">
    <text evidence="2">Carbohydrate degradation; glycolysis; D-glyceraldehyde 3-phosphate from glycerone phosphate: step 1/1.</text>
</comment>
<comment type="subunit">
    <text evidence="2">Homodimer.</text>
</comment>
<comment type="subcellular location">
    <subcellularLocation>
        <location evidence="2">Cytoplasm</location>
    </subcellularLocation>
</comment>
<comment type="similarity">
    <text evidence="3">Belongs to the triosephosphate isomerase family.</text>
</comment>
<keyword id="KW-0963">Cytoplasm</keyword>
<keyword id="KW-0903">Direct protein sequencing</keyword>
<keyword id="KW-0312">Gluconeogenesis</keyword>
<keyword id="KW-0324">Glycolysis</keyword>
<keyword id="KW-0413">Isomerase</keyword>
<keyword id="KW-0456">Lyase</keyword>
<keyword id="KW-1185">Reference proteome</keyword>
<evidence type="ECO:0000250" key="1">
    <source>
        <dbReference type="UniProtKB" id="P00939"/>
    </source>
</evidence>
<evidence type="ECO:0000255" key="2">
    <source>
        <dbReference type="PROSITE-ProRule" id="PRU10127"/>
    </source>
</evidence>
<evidence type="ECO:0000305" key="3"/>
<reference key="1">
    <citation type="journal article" date="1974" name="Biochem. J.">
        <title>Triose phosphate isomerase from the coelacanth. An approach to the rapid determination of an amino acid sequence with small amounts of material.</title>
        <authorList>
            <person name="Kolb E."/>
            <person name="Harris J.I."/>
            <person name="Bridgen J."/>
        </authorList>
    </citation>
    <scope>PROTEIN SEQUENCE</scope>
</reference>
<name>TPIS_LATCH</name>
<feature type="chain" id="PRO_0000090122" description="Triosephosphate isomerase">
    <location>
        <begin position="1"/>
        <end position="247"/>
    </location>
</feature>
<feature type="active site" description="Electrophile" evidence="2">
    <location>
        <position position="94"/>
    </location>
</feature>
<feature type="active site" description="Proton acceptor" evidence="2">
    <location>
        <position position="164"/>
    </location>
</feature>
<feature type="binding site" evidence="2">
    <location>
        <position position="10"/>
    </location>
    <ligand>
        <name>substrate</name>
    </ligand>
</feature>
<feature type="binding site" evidence="2">
    <location>
        <position position="12"/>
    </location>
    <ligand>
        <name>substrate</name>
    </ligand>
</feature>
<organism>
    <name type="scientific">Latimeria chalumnae</name>
    <name type="common">Coelacanth</name>
    <dbReference type="NCBI Taxonomy" id="7897"/>
    <lineage>
        <taxon>Eukaryota</taxon>
        <taxon>Metazoa</taxon>
        <taxon>Chordata</taxon>
        <taxon>Craniata</taxon>
        <taxon>Vertebrata</taxon>
        <taxon>Euteleostomi</taxon>
        <taxon>Coelacanthiformes</taxon>
        <taxon>Coelacanthidae</taxon>
        <taxon>Latimeria</taxon>
    </lineage>
</organism>
<protein>
    <recommendedName>
        <fullName>Triosephosphate isomerase</fullName>
        <shortName>TIM</shortName>
        <ecNumber evidence="2">5.3.1.1</ecNumber>
    </recommendedName>
    <alternativeName>
        <fullName evidence="1">Methylglyoxal synthase</fullName>
        <ecNumber evidence="1">4.2.3.3</ecNumber>
    </alternativeName>
</protein>
<proteinExistence type="evidence at protein level"/>
<dbReference type="EC" id="5.3.1.1" evidence="2"/>
<dbReference type="EC" id="4.2.3.3" evidence="1"/>
<dbReference type="PIR" id="A01167">
    <property type="entry name" value="ISLAT"/>
</dbReference>
<dbReference type="SMR" id="P00941"/>
<dbReference type="FunCoup" id="P00941">
    <property type="interactions" value="1202"/>
</dbReference>
<dbReference type="STRING" id="7897.ENSLACP00000006779"/>
<dbReference type="InParanoid" id="P00941"/>
<dbReference type="UniPathway" id="UPA00109">
    <property type="reaction ID" value="UER00189"/>
</dbReference>
<dbReference type="UniPathway" id="UPA00138"/>
<dbReference type="Proteomes" id="UP000008672">
    <property type="component" value="Unassembled WGS sequence"/>
</dbReference>
<dbReference type="GO" id="GO:0005829">
    <property type="term" value="C:cytosol"/>
    <property type="evidence" value="ECO:0007669"/>
    <property type="project" value="TreeGrafter"/>
</dbReference>
<dbReference type="GO" id="GO:0008929">
    <property type="term" value="F:methylglyoxal synthase activity"/>
    <property type="evidence" value="ECO:0007669"/>
    <property type="project" value="UniProtKB-EC"/>
</dbReference>
<dbReference type="GO" id="GO:0004807">
    <property type="term" value="F:triose-phosphate isomerase activity"/>
    <property type="evidence" value="ECO:0007669"/>
    <property type="project" value="UniProtKB-EC"/>
</dbReference>
<dbReference type="GO" id="GO:0006094">
    <property type="term" value="P:gluconeogenesis"/>
    <property type="evidence" value="ECO:0007669"/>
    <property type="project" value="UniProtKB-UniPathway"/>
</dbReference>
<dbReference type="GO" id="GO:0046166">
    <property type="term" value="P:glyceraldehyde-3-phosphate biosynthetic process"/>
    <property type="evidence" value="ECO:0007669"/>
    <property type="project" value="TreeGrafter"/>
</dbReference>
<dbReference type="GO" id="GO:0019563">
    <property type="term" value="P:glycerol catabolic process"/>
    <property type="evidence" value="ECO:0007669"/>
    <property type="project" value="TreeGrafter"/>
</dbReference>
<dbReference type="GO" id="GO:0006096">
    <property type="term" value="P:glycolytic process"/>
    <property type="evidence" value="ECO:0007669"/>
    <property type="project" value="UniProtKB-UniPathway"/>
</dbReference>
<dbReference type="CDD" id="cd00311">
    <property type="entry name" value="TIM"/>
    <property type="match status" value="1"/>
</dbReference>
<dbReference type="FunFam" id="3.20.20.70:FF:000025">
    <property type="entry name" value="Triosephosphate isomerase"/>
    <property type="match status" value="1"/>
</dbReference>
<dbReference type="Gene3D" id="3.20.20.70">
    <property type="entry name" value="Aldolase class I"/>
    <property type="match status" value="1"/>
</dbReference>
<dbReference type="HAMAP" id="MF_00147_B">
    <property type="entry name" value="TIM_B"/>
    <property type="match status" value="1"/>
</dbReference>
<dbReference type="InterPro" id="IPR013785">
    <property type="entry name" value="Aldolase_TIM"/>
</dbReference>
<dbReference type="InterPro" id="IPR035990">
    <property type="entry name" value="TIM_sf"/>
</dbReference>
<dbReference type="InterPro" id="IPR022896">
    <property type="entry name" value="TrioseP_Isoase_bac/euk"/>
</dbReference>
<dbReference type="InterPro" id="IPR000652">
    <property type="entry name" value="Triosephosphate_isomerase"/>
</dbReference>
<dbReference type="InterPro" id="IPR020861">
    <property type="entry name" value="Triosephosphate_isomerase_AS"/>
</dbReference>
<dbReference type="NCBIfam" id="TIGR00419">
    <property type="entry name" value="tim"/>
    <property type="match status" value="1"/>
</dbReference>
<dbReference type="PANTHER" id="PTHR21139">
    <property type="entry name" value="TRIOSEPHOSPHATE ISOMERASE"/>
    <property type="match status" value="1"/>
</dbReference>
<dbReference type="PANTHER" id="PTHR21139:SF2">
    <property type="entry name" value="TRIOSEPHOSPHATE ISOMERASE"/>
    <property type="match status" value="1"/>
</dbReference>
<dbReference type="Pfam" id="PF00121">
    <property type="entry name" value="TIM"/>
    <property type="match status" value="1"/>
</dbReference>
<dbReference type="SUPFAM" id="SSF51351">
    <property type="entry name" value="Triosephosphate isomerase (TIM)"/>
    <property type="match status" value="1"/>
</dbReference>
<dbReference type="PROSITE" id="PS00171">
    <property type="entry name" value="TIM_1"/>
    <property type="match status" value="1"/>
</dbReference>
<dbReference type="PROSITE" id="PS51440">
    <property type="entry name" value="TIM_2"/>
    <property type="match status" value="1"/>
</dbReference>